<keyword id="KW-0007">Acetylation</keyword>
<keyword id="KW-0010">Activator</keyword>
<keyword id="KW-0112">Calmodulin-binding</keyword>
<keyword id="KW-0963">Cytoplasm</keyword>
<keyword id="KW-0221">Differentiation</keyword>
<keyword id="KW-0238">DNA-binding</keyword>
<keyword id="KW-0539">Nucleus</keyword>
<keyword id="KW-0678">Repressor</keyword>
<keyword id="KW-0726">Sexual differentiation</keyword>
<keyword id="KW-0804">Transcription</keyword>
<keyword id="KW-0805">Transcription regulation</keyword>
<name>SRY_ALCAC</name>
<feature type="chain" id="PRO_0000048631" description="Sex-determining region Y protein">
    <location>
        <begin position="1"/>
        <end position="229"/>
    </location>
</feature>
<feature type="DNA-binding region" description="HMG box" evidence="3">
    <location>
        <begin position="54"/>
        <end position="122"/>
    </location>
</feature>
<evidence type="ECO:0000250" key="1">
    <source>
        <dbReference type="UniProtKB" id="P36394"/>
    </source>
</evidence>
<evidence type="ECO:0000250" key="2">
    <source>
        <dbReference type="UniProtKB" id="Q05066"/>
    </source>
</evidence>
<evidence type="ECO:0000255" key="3">
    <source>
        <dbReference type="PROSITE-ProRule" id="PRU00267"/>
    </source>
</evidence>
<evidence type="ECO:0000305" key="4"/>
<accession>Q863D9</accession>
<protein>
    <recommendedName>
        <fullName>Sex-determining region Y protein</fullName>
    </recommendedName>
    <alternativeName>
        <fullName>Testis-determining factor</fullName>
    </alternativeName>
</protein>
<gene>
    <name type="primary">SRY</name>
    <name type="synonym">TDF</name>
</gene>
<reference key="1">
    <citation type="submission" date="2002-09" db="EMBL/GenBank/DDBJ databases">
        <title>SRY DNA phylogeny of red deer.</title>
        <authorList>
            <person name="Ludt C.J."/>
            <person name="Kuehn R."/>
            <person name="Schroeder W."/>
            <person name="Rottmann O."/>
        </authorList>
    </citation>
    <scope>NUCLEOTIDE SEQUENCE [GENOMIC DNA]</scope>
    <source>
        <tissue>Corpus spongiosum</tissue>
    </source>
</reference>
<dbReference type="EMBL" id="AY148965">
    <property type="protein sequence ID" value="AAN65339.1"/>
    <property type="molecule type" value="Genomic_DNA"/>
</dbReference>
<dbReference type="SMR" id="Q863D9"/>
<dbReference type="GO" id="GO:0005737">
    <property type="term" value="C:cytoplasm"/>
    <property type="evidence" value="ECO:0007669"/>
    <property type="project" value="UniProtKB-SubCell"/>
</dbReference>
<dbReference type="GO" id="GO:0016607">
    <property type="term" value="C:nuclear speck"/>
    <property type="evidence" value="ECO:0007669"/>
    <property type="project" value="UniProtKB-SubCell"/>
</dbReference>
<dbReference type="GO" id="GO:0005634">
    <property type="term" value="C:nucleus"/>
    <property type="evidence" value="ECO:0000250"/>
    <property type="project" value="UniProtKB"/>
</dbReference>
<dbReference type="GO" id="GO:0005516">
    <property type="term" value="F:calmodulin binding"/>
    <property type="evidence" value="ECO:0007669"/>
    <property type="project" value="UniProtKB-KW"/>
</dbReference>
<dbReference type="GO" id="GO:0001228">
    <property type="term" value="F:DNA-binding transcription activator activity, RNA polymerase II-specific"/>
    <property type="evidence" value="ECO:0007669"/>
    <property type="project" value="TreeGrafter"/>
</dbReference>
<dbReference type="GO" id="GO:0000978">
    <property type="term" value="F:RNA polymerase II cis-regulatory region sequence-specific DNA binding"/>
    <property type="evidence" value="ECO:0007669"/>
    <property type="project" value="TreeGrafter"/>
</dbReference>
<dbReference type="GO" id="GO:0030154">
    <property type="term" value="P:cell differentiation"/>
    <property type="evidence" value="ECO:0007669"/>
    <property type="project" value="UniProtKB-KW"/>
</dbReference>
<dbReference type="GO" id="GO:0030238">
    <property type="term" value="P:male sex determination"/>
    <property type="evidence" value="ECO:0007669"/>
    <property type="project" value="InterPro"/>
</dbReference>
<dbReference type="GO" id="GO:0007548">
    <property type="term" value="P:sex differentiation"/>
    <property type="evidence" value="ECO:0007669"/>
    <property type="project" value="UniProtKB-KW"/>
</dbReference>
<dbReference type="CDD" id="cd22028">
    <property type="entry name" value="HMG-box_SoxA_SoxB_SoxG"/>
    <property type="match status" value="1"/>
</dbReference>
<dbReference type="FunFam" id="1.10.30.10:FF:000002">
    <property type="entry name" value="transcription factor Sox-2"/>
    <property type="match status" value="1"/>
</dbReference>
<dbReference type="Gene3D" id="1.10.30.10">
    <property type="entry name" value="High mobility group box domain"/>
    <property type="match status" value="1"/>
</dbReference>
<dbReference type="InterPro" id="IPR009071">
    <property type="entry name" value="HMG_box_dom"/>
</dbReference>
<dbReference type="InterPro" id="IPR036910">
    <property type="entry name" value="HMG_box_dom_sf"/>
</dbReference>
<dbReference type="InterPro" id="IPR017253">
    <property type="entry name" value="SRY"/>
</dbReference>
<dbReference type="InterPro" id="IPR050140">
    <property type="entry name" value="SRY-related_HMG-box_TF-like"/>
</dbReference>
<dbReference type="PANTHER" id="PTHR10270:SF161">
    <property type="entry name" value="SEX-DETERMINING REGION Y PROTEIN"/>
    <property type="match status" value="1"/>
</dbReference>
<dbReference type="PANTHER" id="PTHR10270">
    <property type="entry name" value="SOX TRANSCRIPTION FACTOR"/>
    <property type="match status" value="1"/>
</dbReference>
<dbReference type="Pfam" id="PF00505">
    <property type="entry name" value="HMG_box"/>
    <property type="match status" value="1"/>
</dbReference>
<dbReference type="PIRSF" id="PIRSF037653">
    <property type="entry name" value="SRY"/>
    <property type="match status" value="1"/>
</dbReference>
<dbReference type="SMART" id="SM00398">
    <property type="entry name" value="HMG"/>
    <property type="match status" value="1"/>
</dbReference>
<dbReference type="SUPFAM" id="SSF47095">
    <property type="entry name" value="HMG-box"/>
    <property type="match status" value="1"/>
</dbReference>
<dbReference type="PROSITE" id="PS50118">
    <property type="entry name" value="HMG_BOX_2"/>
    <property type="match status" value="1"/>
</dbReference>
<sequence>MFRVLNDDVYSPAEIQQQNPLAFGKASSLFTDNRSANDQCETGENVRESGQDHVKRPMNAFIVWSRERRRKVALENPKMQNSEISKQLGYEWKRLTDAEKRPFFEEAQRLLAIHRDKYPDYKYRPRRKTKRQQKLLPADSSILCKQMHVETLQPFTYRNGCAKTTCSRMESQLSLSQSVTITNSFFQKEHHNSWTNLGHNRVTLSTQISADFPFYQSLQPGLSCAYFQY</sequence>
<comment type="function">
    <text evidence="1 2">Transcriptional regulator that controls a genetic switch in male development. It is necessary and sufficient for initiating male sex determination by directing the development of supporting cell precursors (pre-Sertoli cells) as Sertoli rather than granulosa cells. Involved in different aspects of gene regulation including promoter activation or repression. Binds to the DNA consensus sequence 5'-[AT]AACAA[AT]-3'. SRY HMG box recognizes DNA by partial intercalation in the minor groove and promotes DNA bending. Also involved in pre-mRNA splicing (By similarity). In male adult brain involved in the maintenance of motor functions of dopaminergic neurons (By similarity).</text>
</comment>
<comment type="subunit">
    <text evidence="2">Interacts with CALM, EP300, HDAC3, KPNB1, ZNF208 isoform KRAB-O, PARP1, SLC9A3R2 and WT1. The interaction with EP300 modulates its DNA-binding activity. The interaction with KPNB1 is sensitive to dissociation by Ran in the GTP-bound form. Interaction with PARP1 impaired its DNA-binding activity.</text>
</comment>
<comment type="subcellular location">
    <subcellularLocation>
        <location evidence="2">Nucleus speckle</location>
    </subcellularLocation>
    <subcellularLocation>
        <location evidence="2">Cytoplasm</location>
    </subcellularLocation>
    <subcellularLocation>
        <location evidence="2">Nucleus</location>
    </subcellularLocation>
</comment>
<comment type="PTM">
    <text evidence="2">Acetylation of Lys-130 contributes to its nuclear localization and enhances its interaction with KPNB1. Deacetylated by HDAC3.</text>
</comment>
<comment type="similarity">
    <text evidence="4">Belongs to the SRY family.</text>
</comment>
<comment type="online information" name="Protein Spotlight">
    <link uri="https://www.proteinspotlight.org/back_issues/080"/>
    <text>The tenuous nature of sex - Issue 80 of March 2007</text>
</comment>
<organism>
    <name type="scientific">Alces alces cameloides</name>
    <name type="common">Ussuri moose</name>
    <name type="synonym">Siberian moose</name>
    <dbReference type="NCBI Taxonomy" id="162953"/>
    <lineage>
        <taxon>Eukaryota</taxon>
        <taxon>Metazoa</taxon>
        <taxon>Chordata</taxon>
        <taxon>Craniata</taxon>
        <taxon>Vertebrata</taxon>
        <taxon>Euteleostomi</taxon>
        <taxon>Mammalia</taxon>
        <taxon>Eutheria</taxon>
        <taxon>Laurasiatheria</taxon>
        <taxon>Artiodactyla</taxon>
        <taxon>Ruminantia</taxon>
        <taxon>Pecora</taxon>
        <taxon>Cervidae</taxon>
        <taxon>Odocoileinae</taxon>
        <taxon>Alces</taxon>
    </lineage>
</organism>
<proteinExistence type="inferred from homology"/>